<dbReference type="EMBL" id="CP001738">
    <property type="protein sequence ID" value="ACY96205.1"/>
    <property type="molecule type" value="Genomic_DNA"/>
</dbReference>
<dbReference type="RefSeq" id="WP_012850989.1">
    <property type="nucleotide sequence ID" value="NC_013510.1"/>
</dbReference>
<dbReference type="PDB" id="4LWS">
    <property type="method" value="X-ray"/>
    <property type="resolution" value="2.00 A"/>
    <property type="chains" value="A=2-104"/>
</dbReference>
<dbReference type="PDB" id="4N1A">
    <property type="method" value="X-ray"/>
    <property type="resolution" value="3.24 A"/>
    <property type="chains" value="G/H/J/K=82-104"/>
</dbReference>
<dbReference type="PDBsum" id="4LWS"/>
<dbReference type="PDBsum" id="4N1A"/>
<dbReference type="SMR" id="D1A4H0"/>
<dbReference type="STRING" id="471852.Tcur_0610"/>
<dbReference type="KEGG" id="tcu:Tcur_0610"/>
<dbReference type="eggNOG" id="COG4842">
    <property type="taxonomic scope" value="Bacteria"/>
</dbReference>
<dbReference type="HOGENOM" id="CLU_151185_2_0_11"/>
<dbReference type="EvolutionaryTrace" id="D1A4H0"/>
<dbReference type="Proteomes" id="UP000001918">
    <property type="component" value="Chromosome"/>
</dbReference>
<dbReference type="GO" id="GO:0005576">
    <property type="term" value="C:extracellular region"/>
    <property type="evidence" value="ECO:0007669"/>
    <property type="project" value="UniProtKB-SubCell"/>
</dbReference>
<dbReference type="Gene3D" id="1.10.287.1060">
    <property type="entry name" value="ESAT-6-like"/>
    <property type="match status" value="1"/>
</dbReference>
<dbReference type="InterPro" id="IPR036689">
    <property type="entry name" value="ESAT-6-like_sf"/>
</dbReference>
<dbReference type="InterPro" id="IPR010310">
    <property type="entry name" value="T7SS_ESAT-6-like"/>
</dbReference>
<dbReference type="NCBIfam" id="TIGR03930">
    <property type="entry name" value="WXG100_ESAT6"/>
    <property type="match status" value="1"/>
</dbReference>
<dbReference type="Pfam" id="PF06013">
    <property type="entry name" value="WXG100"/>
    <property type="match status" value="1"/>
</dbReference>
<dbReference type="SUPFAM" id="SSF140453">
    <property type="entry name" value="EsxAB dimer-like"/>
    <property type="match status" value="1"/>
</dbReference>
<name>ESXB_THECD</name>
<evidence type="ECO:0000250" key="1">
    <source>
        <dbReference type="UniProtKB" id="P9WNK5"/>
    </source>
</evidence>
<evidence type="ECO:0000255" key="2"/>
<evidence type="ECO:0000255" key="3">
    <source>
        <dbReference type="RuleBase" id="RU362001"/>
    </source>
</evidence>
<evidence type="ECO:0000269" key="4">
    <source>
    </source>
</evidence>
<evidence type="ECO:0000303" key="5">
    <source>
    </source>
</evidence>
<evidence type="ECO:0000305" key="6"/>
<evidence type="ECO:0000305" key="7">
    <source>
    </source>
</evidence>
<evidence type="ECO:0007744" key="8">
    <source>
        <dbReference type="PDB" id="4LWS"/>
    </source>
</evidence>
<evidence type="ECO:0007744" key="9">
    <source>
        <dbReference type="PDB" id="4N1A"/>
    </source>
</evidence>
<evidence type="ECO:0007829" key="10">
    <source>
        <dbReference type="PDB" id="4LWS"/>
    </source>
</evidence>
<protein>
    <recommendedName>
        <fullName evidence="3">ESAT-6-like protein</fullName>
    </recommendedName>
</protein>
<accession>D1A4H0</accession>
<reference key="1">
    <citation type="journal article" date="2011" name="Stand. Genomic Sci.">
        <title>Complete genome sequence of Thermomonospora curvata type strain (B9).</title>
        <authorList>
            <person name="Chertkov O."/>
            <person name="Sikorski J."/>
            <person name="Nolan M."/>
            <person name="Lapidus A."/>
            <person name="Lucas S."/>
            <person name="Del Rio T.G."/>
            <person name="Tice H."/>
            <person name="Cheng J.F."/>
            <person name="Goodwin L."/>
            <person name="Pitluck S."/>
            <person name="Liolios K."/>
            <person name="Ivanova N."/>
            <person name="Mavromatis K."/>
            <person name="Mikhailova N."/>
            <person name="Ovchinnikova G."/>
            <person name="Pati A."/>
            <person name="Chen A."/>
            <person name="Palaniappan K."/>
            <person name="Djao O.D."/>
            <person name="Land M."/>
            <person name="Hauser L."/>
            <person name="Chang Y.J."/>
            <person name="Jeffries C.D."/>
            <person name="Brettin T."/>
            <person name="Han C."/>
            <person name="Detter J.C."/>
            <person name="Rohde M."/>
            <person name="Goeker M."/>
            <person name="Woyke T."/>
            <person name="Bristow J."/>
            <person name="Eisen J.A."/>
            <person name="Markowitz V."/>
            <person name="Hugenholtz P."/>
            <person name="Klenk H.P."/>
            <person name="Kyrpides N.C."/>
        </authorList>
    </citation>
    <scope>NUCLEOTIDE SEQUENCE [LARGE SCALE GENOMIC DNA]</scope>
    <source>
        <strain>ATCC 19995 / DSM 43183 / JCM 3096 / KCTC 9072 / NBRC 15933 / NCIMB 10081 / Henssen B9</strain>
    </source>
</reference>
<reference evidence="8 9" key="2">
    <citation type="journal article" date="2015" name="Cell">
        <title>Substrates control multimerization and activation of the multi-domain ATPase motor of type VII secretion.</title>
        <authorList>
            <person name="Rosenberg O.S."/>
            <person name="Dovala D."/>
            <person name="Li X."/>
            <person name="Connolly L."/>
            <person name="Bendebury A."/>
            <person name="Finer-Moore J."/>
            <person name="Holton J."/>
            <person name="Cheng Y."/>
            <person name="Stroud R.M."/>
            <person name="Cox J.S."/>
        </authorList>
    </citation>
    <scope>X-RAY CRYSTALLOGRAPHY (2.00 ANGSTROMS) OF 2-104 IN COMPLEX WITH ESXA</scope>
    <scope>X-RAY CRYSTALLOGRAPHY (3.24 ANGSTROMS) OF 82-104 IN COMPLEX WITH ECCC C-TERMINUS</scope>
    <scope>FUNCTION</scope>
    <scope>INTERACTION WITH ECCC AND ESXA</scope>
    <scope>SUBUNIT</scope>
    <scope>MUTAGENESIS OF TYR-84; GLU-88; 98-VAL--GLY-104; VAL-98 AND LEU-102</scope>
    <source>
        <strain>ATCC 19995 / DSM 43183 / JCM 3096 / KCTC 9072 / NBRC 15933 / NCIMB 10081 / Henssen B9</strain>
    </source>
</reference>
<feature type="chain" id="PRO_0000438303" description="ESAT-6-like protein">
    <location>
        <begin position="1"/>
        <end position="104"/>
    </location>
</feature>
<feature type="coiled-coil region" evidence="2">
    <location>
        <begin position="12"/>
        <end position="43"/>
    </location>
</feature>
<feature type="mutagenesis site" description="Still activates EccC A-543 ATPase activity." evidence="4">
    <original>Y</original>
    <variation>A</variation>
    <location>
        <position position="84"/>
    </location>
</feature>
<feature type="mutagenesis site" description="Still activates EccC A-543 ATPase activity." evidence="4">
    <original>E</original>
    <variation>A</variation>
    <location>
        <position position="88"/>
    </location>
</feature>
<feature type="mutagenesis site" description="Interacts with M.tuberculosis EccCb1 instead of endogenous EccC, still interacts with endogenous EsxA, mutations change binding site to that of M.tuberculosis." evidence="4">
    <original>VQALLNG</original>
    <variation>LLSQMGF</variation>
    <location>
        <begin position="98"/>
        <end position="104"/>
    </location>
</feature>
<feature type="mutagenesis site" description="Peptide of residues 95-104 no longer disrupts EsxA-EsxB complex, does not activate ATPase activity of mutant EccC A-543." evidence="4">
    <original>V</original>
    <variation>A</variation>
    <location>
        <position position="98"/>
    </location>
</feature>
<feature type="mutagenesis site" description="Peptide of residues 95-104 no longer disrupts EsxA-EsxB complex." evidence="4">
    <original>L</original>
    <variation>A</variation>
    <location>
        <position position="102"/>
    </location>
</feature>
<feature type="helix" evidence="10">
    <location>
        <begin position="5"/>
        <end position="42"/>
    </location>
</feature>
<feature type="helix" evidence="10">
    <location>
        <begin position="47"/>
        <end position="50"/>
    </location>
</feature>
<feature type="helix" evidence="10">
    <location>
        <begin position="53"/>
        <end position="92"/>
    </location>
</feature>
<feature type="helix" evidence="10">
    <location>
        <begin position="95"/>
        <end position="102"/>
    </location>
</feature>
<keyword id="KW-0002">3D-structure</keyword>
<keyword id="KW-0175">Coiled coil</keyword>
<keyword id="KW-1185">Reference proteome</keyword>
<keyword id="KW-0964">Secreted</keyword>
<gene>
    <name evidence="5" type="primary">esxB</name>
    <name type="ordered locus">Tcur_0610</name>
</gene>
<organism>
    <name type="scientific">Thermomonospora curvata (strain ATCC 19995 / DSM 43183 / JCM 3096 / KCTC 9072 / NBRC 15933 / NCIMB 10081 / Henssen B9)</name>
    <dbReference type="NCBI Taxonomy" id="471852"/>
    <lineage>
        <taxon>Bacteria</taxon>
        <taxon>Bacillati</taxon>
        <taxon>Actinomycetota</taxon>
        <taxon>Actinomycetes</taxon>
        <taxon>Streptosporangiales</taxon>
        <taxon>Thermomonosporaceae</taxon>
        <taxon>Thermomonospora</taxon>
    </lineage>
</organism>
<proteinExistence type="evidence at protein level"/>
<sequence length="104" mass="11511">MAPQSAVDRAAMAQAAQDIEQSANAIRGMQNQLASAKDQLRSHWEGDASMAFEAVFNRFNEDFSRVLKALDGMHESLVQTRITYEAREEAAQQSVNRVQALLNG</sequence>
<comment type="function">
    <text evidence="1 4">May help regulate assembly and function of the type VII secretion system (T7SS). Binds to EccC and induces its multimerization (PubMed:25865481). May serve as a chaperone for EsxA (By similarity).</text>
</comment>
<comment type="subunit">
    <text evidence="4">In isolation forms a homodimer (PubMed:25865481). Forms a tight 1:1 complex with EsxA (PubMed:25865481). Forms a complex with EsxA and EccC, probably wholly mediated by EsxB; binds in a pocket in the third FtsK (ATPase) domain of EccC (residues 1163-1208) (PubMed:25865481).</text>
</comment>
<comment type="subcellular location">
    <subcellularLocation>
        <location evidence="1">Secreted</location>
    </subcellularLocation>
    <text evidence="7">Probably secreted via the ESX / type VII secretion system (T7SS).</text>
</comment>
<comment type="similarity">
    <text evidence="6">Belongs to the WXG100 family. CFP-10 subfamily.</text>
</comment>